<protein>
    <recommendedName>
        <fullName>GTPase-activating protein GYP3</fullName>
    </recommendedName>
    <alternativeName>
        <fullName>Multicopy suppressor of bud emergence 3</fullName>
    </alternativeName>
    <alternativeName>
        <fullName>Protein MSB3</fullName>
    </alternativeName>
</protein>
<gene>
    <name type="primary">MSB3</name>
    <name type="synonym">GYP3</name>
    <name type="ordered locus">YNL293W</name>
    <name type="ORF">N0470</name>
</gene>
<keyword id="KW-0963">Cytoplasm</keyword>
<keyword id="KW-0343">GTPase activation</keyword>
<keyword id="KW-0597">Phosphoprotein</keyword>
<keyword id="KW-1185">Reference proteome</keyword>
<accession>P48566</accession>
<accession>D6W0Q0</accession>
<name>GYP3_YEAST</name>
<feature type="chain" id="PRO_0000208012" description="GTPase-activating protein GYP3">
    <location>
        <begin position="1"/>
        <end position="633"/>
    </location>
</feature>
<feature type="domain" description="Rab-GAP TBC" evidence="1">
    <location>
        <begin position="223"/>
        <end position="456"/>
    </location>
</feature>
<feature type="region of interest" description="Disordered" evidence="2">
    <location>
        <begin position="26"/>
        <end position="127"/>
    </location>
</feature>
<feature type="compositionally biased region" description="Basic and acidic residues" evidence="2">
    <location>
        <begin position="37"/>
        <end position="47"/>
    </location>
</feature>
<feature type="compositionally biased region" description="Acidic residues" evidence="2">
    <location>
        <begin position="99"/>
        <end position="115"/>
    </location>
</feature>
<feature type="modified residue" description="Phosphoserine" evidence="6">
    <location>
        <position position="147"/>
    </location>
</feature>
<feature type="modified residue" description="Phosphoserine" evidence="6">
    <location>
        <position position="484"/>
    </location>
</feature>
<feature type="mutagenesis site" description="Reduced GAP activity." evidence="4">
    <original>R</original>
    <variation>F</variation>
    <variation>K</variation>
    <location>
        <position position="282"/>
    </location>
</feature>
<reference key="1">
    <citation type="journal article" date="1995" name="Yeast">
        <title>Sequence analysis of a 30 kb DNA segment from yeast chromosome XIV carrying a ribosomal protein gene cluster, the genes encoding a plasma membrane protein and a subunit of replication factor C, and a novel putative serine/threonine protein kinase gene.</title>
        <authorList>
            <person name="Maurer K.C.T."/>
            <person name="Urbanus J.H.M."/>
            <person name="Planta R.J."/>
        </authorList>
    </citation>
    <scope>NUCLEOTIDE SEQUENCE [GENOMIC DNA]</scope>
    <source>
        <strain>ATCC 96604 / S288c / FY1679</strain>
    </source>
</reference>
<reference key="2">
    <citation type="journal article" date="1997" name="Nature">
        <title>The nucleotide sequence of Saccharomyces cerevisiae chromosome XIV and its evolutionary implications.</title>
        <authorList>
            <person name="Philippsen P."/>
            <person name="Kleine K."/>
            <person name="Poehlmann R."/>
            <person name="Duesterhoeft A."/>
            <person name="Hamberg K."/>
            <person name="Hegemann J.H."/>
            <person name="Obermaier B."/>
            <person name="Urrestarazu L.A."/>
            <person name="Aert R."/>
            <person name="Albermann K."/>
            <person name="Altmann R."/>
            <person name="Andre B."/>
            <person name="Baladron V."/>
            <person name="Ballesta J.P.G."/>
            <person name="Becam A.-M."/>
            <person name="Beinhauer J.D."/>
            <person name="Boskovic J."/>
            <person name="Buitrago M.J."/>
            <person name="Bussereau F."/>
            <person name="Coster F."/>
            <person name="Crouzet M."/>
            <person name="D'Angelo M."/>
            <person name="Dal Pero F."/>
            <person name="De Antoni A."/>
            <person name="del Rey F."/>
            <person name="Doignon F."/>
            <person name="Domdey H."/>
            <person name="Dubois E."/>
            <person name="Fiedler T.A."/>
            <person name="Fleig U."/>
            <person name="Floeth M."/>
            <person name="Fritz C."/>
            <person name="Gaillardin C."/>
            <person name="Garcia-Cantalejo J.M."/>
            <person name="Glansdorff N."/>
            <person name="Goffeau A."/>
            <person name="Gueldener U."/>
            <person name="Herbert C.J."/>
            <person name="Heumann K."/>
            <person name="Heuss-Neitzel D."/>
            <person name="Hilbert H."/>
            <person name="Hinni K."/>
            <person name="Iraqui Houssaini I."/>
            <person name="Jacquet M."/>
            <person name="Jimenez A."/>
            <person name="Jonniaux J.-L."/>
            <person name="Karpfinger-Hartl L."/>
            <person name="Lanfranchi G."/>
            <person name="Lepingle A."/>
            <person name="Levesque H."/>
            <person name="Lyck R."/>
            <person name="Maftahi M."/>
            <person name="Mallet L."/>
            <person name="Maurer C.T.C."/>
            <person name="Messenguy F."/>
            <person name="Mewes H.-W."/>
            <person name="Moestl D."/>
            <person name="Nasr F."/>
            <person name="Nicaud J.-M."/>
            <person name="Niedenthal R.K."/>
            <person name="Pandolfo D."/>
            <person name="Pierard A."/>
            <person name="Piravandi E."/>
            <person name="Planta R.J."/>
            <person name="Pohl T.M."/>
            <person name="Purnelle B."/>
            <person name="Rebischung C."/>
            <person name="Remacha M.A."/>
            <person name="Revuelta J.L."/>
            <person name="Rinke M."/>
            <person name="Saiz J.E."/>
            <person name="Sartorello F."/>
            <person name="Scherens B."/>
            <person name="Sen-Gupta M."/>
            <person name="Soler-Mira A."/>
            <person name="Urbanus J.H.M."/>
            <person name="Valle G."/>
            <person name="Van Dyck L."/>
            <person name="Verhasselt P."/>
            <person name="Vierendeels F."/>
            <person name="Vissers S."/>
            <person name="Voet M."/>
            <person name="Volckaert G."/>
            <person name="Wach A."/>
            <person name="Wambutt R."/>
            <person name="Wedler H."/>
            <person name="Zollner A."/>
            <person name="Hani J."/>
        </authorList>
    </citation>
    <scope>NUCLEOTIDE SEQUENCE [LARGE SCALE GENOMIC DNA]</scope>
    <source>
        <strain>ATCC 204508 / S288c</strain>
    </source>
</reference>
<reference key="3">
    <citation type="journal article" date="2014" name="G3 (Bethesda)">
        <title>The reference genome sequence of Saccharomyces cerevisiae: Then and now.</title>
        <authorList>
            <person name="Engel S.R."/>
            <person name="Dietrich F.S."/>
            <person name="Fisk D.G."/>
            <person name="Binkley G."/>
            <person name="Balakrishnan R."/>
            <person name="Costanzo M.C."/>
            <person name="Dwight S.S."/>
            <person name="Hitz B.C."/>
            <person name="Karra K."/>
            <person name="Nash R.S."/>
            <person name="Weng S."/>
            <person name="Wong E.D."/>
            <person name="Lloyd P."/>
            <person name="Skrzypek M.S."/>
            <person name="Miyasato S.R."/>
            <person name="Simison M."/>
            <person name="Cherry J.M."/>
        </authorList>
    </citation>
    <scope>GENOME REANNOTATION</scope>
    <source>
        <strain>ATCC 204508 / S288c</strain>
    </source>
</reference>
<reference key="4">
    <citation type="journal article" date="2000" name="Mol. Biol. Cell">
        <title>Identification of novel, evolutionarily conserved Cdc42p-interacting proteins and of redundant pathways linking Cdc24p and Cdc42p to actin polarization in yeast.</title>
        <authorList>
            <person name="Bi E."/>
            <person name="Chiavetta J.B."/>
            <person name="Chen H."/>
            <person name="Chen G.-C."/>
            <person name="Chan C.S.M."/>
            <person name="Pringle J.R."/>
        </authorList>
    </citation>
    <scope>FUNCTION</scope>
    <scope>SUBCELLULAR LOCATION</scope>
</reference>
<reference key="5">
    <citation type="journal article" date="2003" name="J. Cell Biol.">
        <title>The GAP activity of Msb3p and Msb4p for the Rab GTPase Sec4p is required for efficient exocytosis and actin organization.</title>
        <authorList>
            <person name="Gao X.D."/>
            <person name="Albert S."/>
            <person name="Tcheperegine S.E."/>
            <person name="Burd C.G."/>
            <person name="Gallwitz D."/>
            <person name="Bi E."/>
        </authorList>
    </citation>
    <scope>FUNCTION</scope>
    <scope>MUTAGENESIS OF ARG-282</scope>
</reference>
<reference key="6">
    <citation type="journal article" date="2003" name="Nature">
        <title>Global analysis of protein expression in yeast.</title>
        <authorList>
            <person name="Ghaemmaghami S."/>
            <person name="Huh W.-K."/>
            <person name="Bower K."/>
            <person name="Howson R.W."/>
            <person name="Belle A."/>
            <person name="Dephoure N."/>
            <person name="O'Shea E.K."/>
            <person name="Weissman J.S."/>
        </authorList>
    </citation>
    <scope>LEVEL OF PROTEIN EXPRESSION [LARGE SCALE ANALYSIS]</scope>
</reference>
<reference key="7">
    <citation type="journal article" date="2008" name="Mol. Cell. Proteomics">
        <title>A multidimensional chromatography technology for in-depth phosphoproteome analysis.</title>
        <authorList>
            <person name="Albuquerque C.P."/>
            <person name="Smolka M.B."/>
            <person name="Payne S.H."/>
            <person name="Bafna V."/>
            <person name="Eng J."/>
            <person name="Zhou H."/>
        </authorList>
    </citation>
    <scope>IDENTIFICATION BY MASS SPECTROMETRY [LARGE SCALE ANALYSIS]</scope>
</reference>
<reference key="8">
    <citation type="journal article" date="2009" name="Science">
        <title>Global analysis of Cdk1 substrate phosphorylation sites provides insights into evolution.</title>
        <authorList>
            <person name="Holt L.J."/>
            <person name="Tuch B.B."/>
            <person name="Villen J."/>
            <person name="Johnson A.D."/>
            <person name="Gygi S.P."/>
            <person name="Morgan D.O."/>
        </authorList>
    </citation>
    <scope>PHOSPHORYLATION [LARGE SCALE ANALYSIS] AT SER-147 AND SER-484</scope>
    <scope>IDENTIFICATION BY MASS SPECTROMETRY [LARGE SCALE ANALYSIS]</scope>
</reference>
<proteinExistence type="evidence at protein level"/>
<dbReference type="EMBL" id="U23084">
    <property type="protein sequence ID" value="AAC49106.1"/>
    <property type="molecule type" value="Genomic_DNA"/>
</dbReference>
<dbReference type="EMBL" id="Z71569">
    <property type="protein sequence ID" value="CAA96211.1"/>
    <property type="molecule type" value="Genomic_DNA"/>
</dbReference>
<dbReference type="EMBL" id="BK006947">
    <property type="protein sequence ID" value="DAA10266.1"/>
    <property type="molecule type" value="Genomic_DNA"/>
</dbReference>
<dbReference type="PIR" id="S60408">
    <property type="entry name" value="S60408"/>
</dbReference>
<dbReference type="RefSeq" id="NP_014106.1">
    <property type="nucleotide sequence ID" value="NM_001183131.1"/>
</dbReference>
<dbReference type="SMR" id="P48566"/>
<dbReference type="BioGRID" id="35544">
    <property type="interactions" value="116"/>
</dbReference>
<dbReference type="ComplexPortal" id="CPX-3188">
    <property type="entry name" value="Polarisome"/>
</dbReference>
<dbReference type="DIP" id="DIP-2783N"/>
<dbReference type="FunCoup" id="P48566">
    <property type="interactions" value="274"/>
</dbReference>
<dbReference type="IntAct" id="P48566">
    <property type="interactions" value="7"/>
</dbReference>
<dbReference type="MINT" id="P48566"/>
<dbReference type="STRING" id="4932.YNL293W"/>
<dbReference type="CarbonylDB" id="P48566"/>
<dbReference type="iPTMnet" id="P48566"/>
<dbReference type="PaxDb" id="4932-YNL293W"/>
<dbReference type="PeptideAtlas" id="P48566"/>
<dbReference type="EnsemblFungi" id="YNL293W_mRNA">
    <property type="protein sequence ID" value="YNL293W"/>
    <property type="gene ID" value="YNL293W"/>
</dbReference>
<dbReference type="GeneID" id="855423"/>
<dbReference type="KEGG" id="sce:YNL293W"/>
<dbReference type="AGR" id="SGD:S000005237"/>
<dbReference type="SGD" id="S000005237">
    <property type="gene designation" value="MSB3"/>
</dbReference>
<dbReference type="VEuPathDB" id="FungiDB:YNL293W"/>
<dbReference type="eggNOG" id="KOG2058">
    <property type="taxonomic scope" value="Eukaryota"/>
</dbReference>
<dbReference type="GeneTree" id="ENSGT00940000176552"/>
<dbReference type="HOGENOM" id="CLU_005350_12_2_1"/>
<dbReference type="InParanoid" id="P48566"/>
<dbReference type="OMA" id="YFARGQE"/>
<dbReference type="OrthoDB" id="294251at2759"/>
<dbReference type="BioCyc" id="YEAST:G3O-33282-MONOMER"/>
<dbReference type="BioGRID-ORCS" id="855423">
    <property type="hits" value="0 hits in 10 CRISPR screens"/>
</dbReference>
<dbReference type="PRO" id="PR:P48566"/>
<dbReference type="Proteomes" id="UP000002311">
    <property type="component" value="Chromosome XIV"/>
</dbReference>
<dbReference type="RNAct" id="P48566">
    <property type="molecule type" value="protein"/>
</dbReference>
<dbReference type="GO" id="GO:0071944">
    <property type="term" value="C:cell periphery"/>
    <property type="evidence" value="ECO:0007005"/>
    <property type="project" value="SGD"/>
</dbReference>
<dbReference type="GO" id="GO:0005935">
    <property type="term" value="C:cellular bud neck"/>
    <property type="evidence" value="ECO:0000314"/>
    <property type="project" value="SGD"/>
</dbReference>
<dbReference type="GO" id="GO:0005934">
    <property type="term" value="C:cellular bud tip"/>
    <property type="evidence" value="ECO:0000314"/>
    <property type="project" value="SGD"/>
</dbReference>
<dbReference type="GO" id="GO:0005737">
    <property type="term" value="C:cytoplasm"/>
    <property type="evidence" value="ECO:0007005"/>
    <property type="project" value="SGD"/>
</dbReference>
<dbReference type="GO" id="GO:0005829">
    <property type="term" value="C:cytosol"/>
    <property type="evidence" value="ECO:0000314"/>
    <property type="project" value="SGD"/>
</dbReference>
<dbReference type="GO" id="GO:0000329">
    <property type="term" value="C:fungal-type vacuole membrane"/>
    <property type="evidence" value="ECO:0000314"/>
    <property type="project" value="SGD"/>
</dbReference>
<dbReference type="GO" id="GO:0000131">
    <property type="term" value="C:incipient cellular bud site"/>
    <property type="evidence" value="ECO:0000314"/>
    <property type="project" value="SGD"/>
</dbReference>
<dbReference type="GO" id="GO:0005770">
    <property type="term" value="C:late endosome"/>
    <property type="evidence" value="ECO:0000314"/>
    <property type="project" value="SGD"/>
</dbReference>
<dbReference type="GO" id="GO:0043332">
    <property type="term" value="C:mating projection tip"/>
    <property type="evidence" value="ECO:0000314"/>
    <property type="project" value="SGD"/>
</dbReference>
<dbReference type="GO" id="GO:0005886">
    <property type="term" value="C:plasma membrane"/>
    <property type="evidence" value="ECO:0000314"/>
    <property type="project" value="SGD"/>
</dbReference>
<dbReference type="GO" id="GO:0000133">
    <property type="term" value="C:polarisome"/>
    <property type="evidence" value="ECO:0000314"/>
    <property type="project" value="SGD"/>
</dbReference>
<dbReference type="GO" id="GO:0005096">
    <property type="term" value="F:GTPase activator activity"/>
    <property type="evidence" value="ECO:0000314"/>
    <property type="project" value="SGD"/>
</dbReference>
<dbReference type="GO" id="GO:0006897">
    <property type="term" value="P:endocytosis"/>
    <property type="evidence" value="ECO:0000315"/>
    <property type="project" value="SGD"/>
</dbReference>
<dbReference type="GO" id="GO:0030010">
    <property type="term" value="P:establishment of cell polarity"/>
    <property type="evidence" value="ECO:0000303"/>
    <property type="project" value="ComplexPortal"/>
</dbReference>
<dbReference type="GO" id="GO:0030950">
    <property type="term" value="P:establishment or maintenance of actin cytoskeleton polarity"/>
    <property type="evidence" value="ECO:0000303"/>
    <property type="project" value="ComplexPortal"/>
</dbReference>
<dbReference type="GO" id="GO:0006887">
    <property type="term" value="P:exocytosis"/>
    <property type="evidence" value="ECO:0000316"/>
    <property type="project" value="SGD"/>
</dbReference>
<dbReference type="GO" id="GO:0070649">
    <property type="term" value="P:formin-nucleated actin cable assembly"/>
    <property type="evidence" value="ECO:0000316"/>
    <property type="project" value="SGD"/>
</dbReference>
<dbReference type="GO" id="GO:0032880">
    <property type="term" value="P:regulation of protein localization"/>
    <property type="evidence" value="ECO:0000315"/>
    <property type="project" value="SGD"/>
</dbReference>
<dbReference type="GO" id="GO:0006903">
    <property type="term" value="P:vesicle targeting"/>
    <property type="evidence" value="ECO:0000303"/>
    <property type="project" value="ComplexPortal"/>
</dbReference>
<dbReference type="FunFam" id="1.10.472.80:FF:000057">
    <property type="entry name" value="GTPase-activating protein"/>
    <property type="match status" value="1"/>
</dbReference>
<dbReference type="FunFam" id="1.10.8.270:FF:000036">
    <property type="entry name" value="GTPase-activating protein GYP3"/>
    <property type="match status" value="1"/>
</dbReference>
<dbReference type="Gene3D" id="1.10.8.270">
    <property type="entry name" value="putative rabgap domain of human tbc1 domain family member 14 like domains"/>
    <property type="match status" value="1"/>
</dbReference>
<dbReference type="Gene3D" id="1.10.472.80">
    <property type="entry name" value="Ypt/Rab-GAP domain of gyp1p, domain 3"/>
    <property type="match status" value="1"/>
</dbReference>
<dbReference type="InterPro" id="IPR000195">
    <property type="entry name" value="Rab-GAP-TBC_dom"/>
</dbReference>
<dbReference type="InterPro" id="IPR035969">
    <property type="entry name" value="Rab-GAP_TBC_sf"/>
</dbReference>
<dbReference type="InterPro" id="IPR050302">
    <property type="entry name" value="Rab_GAP_TBC_domain"/>
</dbReference>
<dbReference type="PANTHER" id="PTHR47219">
    <property type="entry name" value="RAB GTPASE-ACTIVATING PROTEIN 1-LIKE"/>
    <property type="match status" value="1"/>
</dbReference>
<dbReference type="PANTHER" id="PTHR47219:SF20">
    <property type="entry name" value="TBC1 DOMAIN FAMILY MEMBER 2B"/>
    <property type="match status" value="1"/>
</dbReference>
<dbReference type="Pfam" id="PF00566">
    <property type="entry name" value="RabGAP-TBC"/>
    <property type="match status" value="2"/>
</dbReference>
<dbReference type="SMART" id="SM00164">
    <property type="entry name" value="TBC"/>
    <property type="match status" value="1"/>
</dbReference>
<dbReference type="SUPFAM" id="SSF47923">
    <property type="entry name" value="Ypt/Rab-GAP domain of gyp1p"/>
    <property type="match status" value="2"/>
</dbReference>
<dbReference type="PROSITE" id="PS50086">
    <property type="entry name" value="TBC_RABGAP"/>
    <property type="match status" value="1"/>
</dbReference>
<organism>
    <name type="scientific">Saccharomyces cerevisiae (strain ATCC 204508 / S288c)</name>
    <name type="common">Baker's yeast</name>
    <dbReference type="NCBI Taxonomy" id="559292"/>
    <lineage>
        <taxon>Eukaryota</taxon>
        <taxon>Fungi</taxon>
        <taxon>Dikarya</taxon>
        <taxon>Ascomycota</taxon>
        <taxon>Saccharomycotina</taxon>
        <taxon>Saccharomycetes</taxon>
        <taxon>Saccharomycetales</taxon>
        <taxon>Saccharomycetaceae</taxon>
        <taxon>Saccharomyces</taxon>
    </lineage>
</organism>
<evidence type="ECO:0000255" key="1">
    <source>
        <dbReference type="PROSITE-ProRule" id="PRU00163"/>
    </source>
</evidence>
<evidence type="ECO:0000256" key="2">
    <source>
        <dbReference type="SAM" id="MobiDB-lite"/>
    </source>
</evidence>
<evidence type="ECO:0000269" key="3">
    <source>
    </source>
</evidence>
<evidence type="ECO:0000269" key="4">
    <source>
    </source>
</evidence>
<evidence type="ECO:0000269" key="5">
    <source>
    </source>
</evidence>
<evidence type="ECO:0007744" key="6">
    <source>
    </source>
</evidence>
<sequence>MQNDQQRFSLQNRTVLAHPYKRLGGAFTVKSPSVPNFHDKMHSDHSSSDSALVNGSFRANDHRSVEPSCLGQASPSEHDGNLSVIDLYGDEVESQRAEGEDDDDNNGDNGNEDLEEVHSDDLDLVPDDDNRQRVELEGAASATSANSNGINNTHFDRYGFKKQNNYISEAEYDKWWVEYSQYCVRRKHKWQLLLEKSGLPVTDDSPSRFPSKSERLKRYVRKGIPAEWRGNAWWHFARGQEKLNKNKGVYSQLLRKMKQIKKQNPNEKQVQDLDIIERDLNRTFPDNIHFQSSLHNKEGPPIIKSLRRVLVAFSLYNPKIGYCQSMNFLAGLLLLFLDEERAFWMLVIITSRYLPGVHNINLEGVNIDQGVLMLCVKEYIPEVWSYIKPSIDHHQKNNKTFSPSNKKVLFNMQKNEFLYRLPPITLCTASWFMSCFVGVVPIETTLRIWDCLFYEESHFLFKVSLAVLKLSEHDLSKIKPRNNSLNYSWGSNLNQRGGSMGQEDSDMEIFQVIQTFPKTLLNPNEIFEKIIFKRRFNLNRLDQDEIDRCRKFVAAQRLKFKTYGELLGNSTSEADLPINDNTDNKGIHITSDAVNEALSSEVYGFKKSLAGVHWNNSIKEKVKQMRKKKDKGD</sequence>
<comment type="function">
    <text evidence="3 4">Regulates exocytosis by functioning as a GAP for SEC4. Stimulates specifically the GTPase activity of YPT6. Also required for efficient polarization of the actin patches.</text>
</comment>
<comment type="subcellular location">
    <subcellularLocation>
        <location evidence="3">Cytoplasm</location>
    </subcellularLocation>
    <subcellularLocation>
        <location evidence="3">Bud</location>
    </subcellularLocation>
    <subcellularLocation>
        <location evidence="3">Bud neck</location>
    </subcellularLocation>
    <text>Localizes to the presumptive bud site, the bud tip and the mother-bud neck.</text>
</comment>
<comment type="miscellaneous">
    <text evidence="5">Present with 178 molecules/cell in log phase SD medium.</text>
</comment>